<sequence>MSSGTPTPSNVVLIGKKPVMNYVLAALTLLNQGVSEIVIKARGRAISKAVDTVEIVRNRFLPDKIEIKEIRVGSQVVTSQDGRQSRVSTIEIAIRKK</sequence>
<proteinExistence type="evidence at protein level"/>
<organism evidence="12">
    <name type="scientific">Saccharolobus islandicus (strain REY15A)</name>
    <name type="common">Sulfolobus islandicus</name>
    <dbReference type="NCBI Taxonomy" id="930945"/>
    <lineage>
        <taxon>Archaea</taxon>
        <taxon>Thermoproteota</taxon>
        <taxon>Thermoprotei</taxon>
        <taxon>Sulfolobales</taxon>
        <taxon>Sulfolobaceae</taxon>
        <taxon>Saccharolobus</taxon>
    </lineage>
</organism>
<accession>F0NHH1</accession>
<name>ALBA1_SACI5</name>
<feature type="initiator methionine" description="Removed" evidence="2">
    <location>
        <position position="1"/>
    </location>
</feature>
<feature type="chain" id="PRO_0000459686" description="DNA/RNA-binding protein Alba 1">
    <location>
        <begin position="2"/>
        <end position="97"/>
    </location>
</feature>
<feature type="binding site" evidence="1">
    <location>
        <position position="16"/>
    </location>
    <ligand>
        <name>RNA</name>
        <dbReference type="ChEBI" id="CHEBI:33697"/>
    </ligand>
</feature>
<feature type="binding site" evidence="1">
    <location>
        <position position="17"/>
    </location>
    <ligand>
        <name>RNA</name>
        <dbReference type="ChEBI" id="CHEBI:33697"/>
    </ligand>
</feature>
<feature type="binding site" evidence="1">
    <location>
        <position position="22"/>
    </location>
    <ligand>
        <name>RNA</name>
        <dbReference type="ChEBI" id="CHEBI:33697"/>
    </ligand>
</feature>
<feature type="binding site" evidence="1">
    <location>
        <position position="42"/>
    </location>
    <ligand>
        <name>RNA</name>
        <dbReference type="ChEBI" id="CHEBI:33697"/>
    </ligand>
</feature>
<feature type="binding site" evidence="1">
    <location>
        <position position="44"/>
    </location>
    <ligand>
        <name>RNA</name>
        <dbReference type="ChEBI" id="CHEBI:33697"/>
    </ligand>
</feature>
<feature type="modified residue" description="N-acetylserine; by ard1 acetylase" evidence="4 5">
    <location>
        <position position="2"/>
    </location>
</feature>
<feature type="modified residue" description="N6,N6,N6-trimethyllysine; alternate" evidence="4 5">
    <location>
        <position position="16"/>
    </location>
</feature>
<feature type="modified residue" description="N6,N6-dimethyllysine; alternate" evidence="4 5">
    <location>
        <position position="16"/>
    </location>
</feature>
<feature type="modified residue" description="N6-acetyllysine; alternate" evidence="2">
    <location>
        <position position="16"/>
    </location>
</feature>
<feature type="modified residue" description="N6-methyllysine; alternate" evidence="4 5">
    <location>
        <position position="16"/>
    </location>
</feature>
<feature type="modified residue" description="Deamidated asparagine; partial" evidence="5">
    <location>
        <position position="31"/>
    </location>
</feature>
<feature type="modified residue" description="Deamidated glutamine; partial" evidence="5">
    <location>
        <position position="32"/>
    </location>
</feature>
<feature type="modified residue" description="N6-methyllysine; partial" evidence="5">
    <location>
        <position position="40"/>
    </location>
</feature>
<feature type="modified residue" description="N6-acetyllysine; partial" evidence="5">
    <location>
        <position position="48"/>
    </location>
</feature>
<feature type="modified residue" description="Aspartate methyl ester; partial" evidence="5">
    <location>
        <position position="51"/>
    </location>
</feature>
<feature type="modified residue" description="Deamidated asparagine; partial" evidence="5">
    <location>
        <position position="58"/>
    </location>
</feature>
<feature type="modified residue" description="N6-acetyllysine; alternate; partial" evidence="5">
    <location>
        <position position="64"/>
    </location>
</feature>
<feature type="modified residue" description="N6-methyllysine; alternate; partial" evidence="5">
    <location>
        <position position="64"/>
    </location>
</feature>
<feature type="modified residue" description="N6-acetyllysine; partial" evidence="5">
    <location>
        <position position="68"/>
    </location>
</feature>
<feature type="modified residue" description="N5-methylglutamine; partial" evidence="5">
    <location>
        <position position="75"/>
    </location>
</feature>
<feature type="modified residue" description="Aspartate methyl ester; partial" evidence="5">
    <location>
        <position position="81"/>
    </location>
</feature>
<feature type="modified residue" description="N6-methyllysine; partial" evidence="5">
    <location>
        <position position="97"/>
    </location>
</feature>
<feature type="mutagenesis site" description="Decreases acetylation. Increases protein abundance in cultured cells with only minimal effects on the growth rates." evidence="5">
    <original>S</original>
    <variation>G</variation>
    <variation>T</variation>
    <variation>V</variation>
    <location>
        <position position="2"/>
    </location>
</feature>
<feature type="mutagenesis site" description="Mutant is likely not viable." evidence="5">
    <original>S</original>
    <variation>P</variation>
    <location>
        <position position="2"/>
    </location>
</feature>
<feature type="mutagenesis site" description="Decreases binding affinity for dsRNA and RNA chaperone activity. Abolishes post-translational methylation. Reduces growth rates. No effect on protein abundance in cultured cells." evidence="5 6">
    <original>K</original>
    <variation>A</variation>
    <location>
        <position position="16"/>
    </location>
</feature>
<feature type="mutagenesis site" description="Significantly decreases binding affinity for dsRNA and abolishes RNA chaperone activity; when associated with I-44. Significantly decreases binding affinity for dsRNA and abolishes RNA chaperone activity; when associated with T-83. Abolishes binding affinity for dsRNA and RNA chaperone activity; when associated with I-44 and T-83." evidence="6">
    <original>K</original>
    <variation>N</variation>
    <location>
        <position position="16"/>
    </location>
</feature>
<feature type="mutagenesis site" description="Abolishes post-translational methylation. No significant effects on growth rates and global gene expression. No effect on protein abundance in cultured cells." evidence="5">
    <original>K</original>
    <variation>R</variation>
    <location>
        <position position="16"/>
    </location>
</feature>
<feature type="mutagenesis site" description="Decreases binding affinity for dsRNA and abolishes RNA chaperone activity. Mutant is not viable." evidence="5 6">
    <original>K</original>
    <variation>A</variation>
    <location>
        <position position="17"/>
    </location>
</feature>
<feature type="mutagenesis site" description="No significant effects on binding affinity for dsRNA. Decreases RNA chaperone activity. Reduces growth rates. No effect on protein abundance in cultured cells." evidence="5 6">
    <original>K</original>
    <variation>R</variation>
    <location>
        <position position="17"/>
    </location>
</feature>
<feature type="mutagenesis site" description="Reduces formation of homodimers and homotetramers, decreases binding affinity for dsRNA and abolishes RNA chaperone activity; when associated with E-24; E-27 and E-60." evidence="6">
    <original>M</original>
    <variation>E</variation>
    <location>
        <position position="20"/>
    </location>
</feature>
<feature type="mutagenesis site" description="Reduces formation of homodimers and homotetramers, decreases binding affinity for dsRNA and abolishes RNA chaperone activity; when associated with E-20; E-27 and E-60." evidence="6">
    <original>L</original>
    <variation>E</variation>
    <location>
        <position position="24"/>
    </location>
</feature>
<feature type="mutagenesis site" description="Reduces formation of homodimers and homotetramers, decreases binding affinity for dsRNA and abolishes RNA chaperone activity; when associated with E-20; E-24 and E-60." evidence="6">
    <original>L</original>
    <variation>E</variation>
    <location>
        <position position="27"/>
    </location>
</feature>
<feature type="mutagenesis site" description="Significantly decreases binding affinity for dsRNA and abolishes RNA chaperone activity; when associated with N-16. Abolishes RNA chaperone activity; when associated with T-83. Abolishes binding affinity for dsRNA and RNA chaperone activity; when associated with N-16 and T-83." evidence="6">
    <original>R</original>
    <variation>I</variation>
    <location>
        <position position="44"/>
    </location>
</feature>
<feature type="mutagenesis site" description="Reduces formation of homodimers and homotetramers, decreases binding affinity for dsRNA and abolishes RNA chaperone activity; when associated with E-20; E-24 and E-27." evidence="6">
    <original>F</original>
    <variation>E</variation>
    <location>
        <position position="60"/>
    </location>
</feature>
<feature type="mutagenesis site" description="Significantly decreases binding affinity for dsRNA and abolishes RNA chaperone activity; when associated with N-16. Abolishes RNA chaperone activity; when associated with I-44. Abolishes binding affinity for dsRNA and RNA chaperone activity; when associated with N-16 and I-44." evidence="6">
    <original>R</original>
    <variation>T</variation>
    <location>
        <position position="83"/>
    </location>
</feature>
<comment type="function">
    <text evidence="1 2 6">Binds double-stranded DNA tightly but without sequence specificity (By similarity). Involved in DNA compaction (By similarity). Possesses DNA endonuclease activity (By similarity). Prevents transcription after DNA binding (By similarity). Binds single-stranded DNA and RNA in vitro (By similarity). Binds rRNA and mRNA in vivo (By similarity). May play a role in maintaining the structural and functional stability of RNA, and, perhaps, ribosomes (By similarity). Binds double-stranded RNA (dsRNA) and exhibits RNA chaperone activity (PubMed:32761152). Required for normal growth (PubMed:32761152).</text>
</comment>
<comment type="subunit">
    <text evidence="6">Forms homodimers and higher order oligomers, e.g. homotetramers.</text>
</comment>
<comment type="subcellular location">
    <subcellularLocation>
        <location evidence="3">Cytoplasm</location>
    </subcellularLocation>
    <subcellularLocation>
        <location evidence="3">Chromosome</location>
    </subcellularLocation>
</comment>
<comment type="PTM">
    <text evidence="2 5">Acetylated (PubMed:29679495). Acetylation at Lys-16 by the Pat acetylase decreases DNA-binding affinity (By similarity). Deacetylation at Lys-16 by the CobB deacetylase increases DNA-binding affinity (By similarity). Acetylation at Ser-2 is involved in the regulation of the turnover of the protein (PubMed:29679495).</text>
</comment>
<comment type="similarity">
    <text evidence="3">Belongs to the histone-like Alba family.</text>
</comment>
<comment type="caution">
    <text evidence="2 4 5">For the orthologous protein Alba 1 in Saccharolobus solfataricus, acetylation at Lys-16 was described (By similarity). In contrast, in the reported experiments for Sulfolobus islandicus, methylation at Lys-16 was detected (PubMed:27555370, PubMed:29679495).</text>
</comment>
<keyword id="KW-0007">Acetylation</keyword>
<keyword id="KW-0143">Chaperone</keyword>
<keyword id="KW-0158">Chromosome</keyword>
<keyword id="KW-0963">Cytoplasm</keyword>
<keyword id="KW-0226">DNA condensation</keyword>
<keyword id="KW-0238">DNA-binding</keyword>
<keyword id="KW-0378">Hydrolase</keyword>
<keyword id="KW-0488">Methylation</keyword>
<keyword id="KW-0540">Nuclease</keyword>
<keyword id="KW-0694">RNA-binding</keyword>
<protein>
    <recommendedName>
        <fullName evidence="10">DNA/RNA-binding protein Alba 1</fullName>
        <ecNumber evidence="2">3.1.-.-</ecNumber>
    </recommendedName>
</protein>
<dbReference type="EC" id="3.1.-.-" evidence="2"/>
<dbReference type="EMBL" id="CP002425">
    <property type="protein sequence ID" value="ADX85192.1"/>
    <property type="molecule type" value="Genomic_DNA"/>
</dbReference>
<dbReference type="RefSeq" id="WP_009992406.1">
    <property type="nucleotide sequence ID" value="NC_017276.1"/>
</dbReference>
<dbReference type="SMR" id="F0NHH1"/>
<dbReference type="STRING" id="930945.SiRe_1125"/>
<dbReference type="GeneID" id="84061577"/>
<dbReference type="KEGG" id="sir:SiRe_1125"/>
<dbReference type="eggNOG" id="arCOG01753">
    <property type="taxonomic scope" value="Archaea"/>
</dbReference>
<dbReference type="HOGENOM" id="CLU_110989_1_0_2"/>
<dbReference type="Proteomes" id="UP000002664">
    <property type="component" value="Chromosome"/>
</dbReference>
<dbReference type="GO" id="GO:0005694">
    <property type="term" value="C:chromosome"/>
    <property type="evidence" value="ECO:0007669"/>
    <property type="project" value="UniProtKB-SubCell"/>
</dbReference>
<dbReference type="GO" id="GO:0005737">
    <property type="term" value="C:cytoplasm"/>
    <property type="evidence" value="ECO:0007669"/>
    <property type="project" value="UniProtKB-SubCell"/>
</dbReference>
<dbReference type="GO" id="GO:0003690">
    <property type="term" value="F:double-stranded DNA binding"/>
    <property type="evidence" value="ECO:0007669"/>
    <property type="project" value="UniProtKB-UniRule"/>
</dbReference>
<dbReference type="GO" id="GO:0004518">
    <property type="term" value="F:nuclease activity"/>
    <property type="evidence" value="ECO:0007669"/>
    <property type="project" value="UniProtKB-KW"/>
</dbReference>
<dbReference type="GO" id="GO:0003723">
    <property type="term" value="F:RNA binding"/>
    <property type="evidence" value="ECO:0007669"/>
    <property type="project" value="UniProtKB-KW"/>
</dbReference>
<dbReference type="GO" id="GO:0030261">
    <property type="term" value="P:chromosome condensation"/>
    <property type="evidence" value="ECO:0007669"/>
    <property type="project" value="UniProtKB-KW"/>
</dbReference>
<dbReference type="FunFam" id="3.30.110.20:FF:000008">
    <property type="entry name" value="DNA/RNA-binding protein Alba 1"/>
    <property type="match status" value="1"/>
</dbReference>
<dbReference type="Gene3D" id="3.30.110.20">
    <property type="entry name" value="Alba-like domain"/>
    <property type="match status" value="1"/>
</dbReference>
<dbReference type="HAMAP" id="MF_01122">
    <property type="entry name" value="AlbA"/>
    <property type="match status" value="1"/>
</dbReference>
<dbReference type="InterPro" id="IPR036882">
    <property type="entry name" value="Alba-like_dom_sf"/>
</dbReference>
<dbReference type="InterPro" id="IPR013795">
    <property type="entry name" value="DNA/RNA-bd_Alba"/>
</dbReference>
<dbReference type="InterPro" id="IPR002775">
    <property type="entry name" value="DNA/RNA-bd_Alba-like"/>
</dbReference>
<dbReference type="NCBIfam" id="TIGR00285">
    <property type="entry name" value="DNA-binding protein Alba"/>
    <property type="match status" value="1"/>
</dbReference>
<dbReference type="NCBIfam" id="NF003088">
    <property type="entry name" value="PRK04015.1"/>
    <property type="match status" value="1"/>
</dbReference>
<dbReference type="Pfam" id="PF01918">
    <property type="entry name" value="Alba"/>
    <property type="match status" value="1"/>
</dbReference>
<dbReference type="PIRSF" id="PIRSF028732">
    <property type="entry name" value="Alba"/>
    <property type="match status" value="1"/>
</dbReference>
<dbReference type="SUPFAM" id="SSF82704">
    <property type="entry name" value="AlbA-like"/>
    <property type="match status" value="1"/>
</dbReference>
<evidence type="ECO:0000250" key="1">
    <source>
        <dbReference type="UniProtKB" id="P60848"/>
    </source>
</evidence>
<evidence type="ECO:0000250" key="2">
    <source>
        <dbReference type="UniProtKB" id="P60849"/>
    </source>
</evidence>
<evidence type="ECO:0000255" key="3">
    <source>
        <dbReference type="HAMAP-Rule" id="MF_01122"/>
    </source>
</evidence>
<evidence type="ECO:0000269" key="4">
    <source>
    </source>
</evidence>
<evidence type="ECO:0000269" key="5">
    <source>
    </source>
</evidence>
<evidence type="ECO:0000269" key="6">
    <source>
    </source>
</evidence>
<evidence type="ECO:0000303" key="7">
    <source>
    </source>
</evidence>
<evidence type="ECO:0000303" key="8">
    <source>
    </source>
</evidence>
<evidence type="ECO:0000303" key="9">
    <source>
    </source>
</evidence>
<evidence type="ECO:0000305" key="10"/>
<evidence type="ECO:0000312" key="11">
    <source>
        <dbReference type="EMBL" id="ADX85192.1"/>
    </source>
</evidence>
<evidence type="ECO:0000312" key="12">
    <source>
        <dbReference type="Proteomes" id="UP000002664"/>
    </source>
</evidence>
<gene>
    <name evidence="10" type="primary">albA1</name>
    <name evidence="8 9" type="synonym">sis10b</name>
    <name evidence="11" type="ordered locus">SiRe_1125</name>
</gene>
<reference evidence="12" key="1">
    <citation type="journal article" date="2011" name="J. Bacteriol.">
        <title>Genome analyses of icelandic strains of Sulfolobus islandicus, model organisms for genetic and virus-host interaction studies.</title>
        <authorList>
            <person name="Guo L."/>
            <person name="Brugger K."/>
            <person name="Liu C."/>
            <person name="Shah S.A."/>
            <person name="Zheng H."/>
            <person name="Zhu Y."/>
            <person name="Wang S."/>
            <person name="Lillestol R.K."/>
            <person name="Chen L."/>
            <person name="Frank J."/>
            <person name="Prangishvili D."/>
            <person name="Paulin L."/>
            <person name="She Q."/>
            <person name="Huang L."/>
            <person name="Garrett R.A."/>
        </authorList>
    </citation>
    <scope>NUCLEOTIDE SEQUENCE [LARGE SCALE GENOMIC DNA]</scope>
    <source>
        <strain>REY15A</strain>
    </source>
</reference>
<reference evidence="10" key="2">
    <citation type="journal article" date="2016" name="Mol. Cell. Proteomics">
        <title>Abundant Lysine Methylation and N-Terminal Acetylation in Sulfolobus islandicus Revealed by Bottom-Up and Top-Down Proteomics.</title>
        <authorList>
            <person name="Vorontsov E.A."/>
            <person name="Rensen E."/>
            <person name="Prangishvili D."/>
            <person name="Krupovic M."/>
            <person name="Chamot-Rooke J."/>
        </authorList>
    </citation>
    <scope>ACETYLATION AT SER-2</scope>
    <scope>METHYLATION AT LYS-16</scope>
    <source>
        <strain evidence="7">LAL14/1</strain>
    </source>
</reference>
<reference evidence="10" key="3">
    <citation type="journal article" date="2018" name="Mol. Microbiol.">
        <title>Insights into the post-translational modifications of archaeal Sis10b (Alba): lysine-16 is methylated, not acetylated, and this does not regulate transcription or growth.</title>
        <authorList>
            <person name="Cao J."/>
            <person name="Wang Q."/>
            <person name="Liu T."/>
            <person name="Peng N."/>
            <person name="Huang L."/>
        </authorList>
    </citation>
    <scope>ACETYLATION AT SER-2; LYS-48; LYS-64 AND LYS-68</scope>
    <scope>DEAMIDATION AT ASN-31; GLN-32 AND ASN-58</scope>
    <scope>METHYLATION AT LYS-16; LYS-40; ASP-51; LYS-64; GLN-75; ASP-81 AND LYS-97</scope>
    <scope>MUTAGENESIS OF SER-2; LYS-16 AND LYS-17</scope>
</reference>
<reference evidence="10" key="4">
    <citation type="journal article" date="2020" name="Nucleic Acids Res.">
        <title>The Sac10b homolog from Sulfolobus islandicus is an RNA chaperone.</title>
        <authorList>
            <person name="Zhang N."/>
            <person name="Guo L."/>
            <person name="Huang L."/>
        </authorList>
    </citation>
    <scope>FUNCTION</scope>
    <scope>SUBUNIT</scope>
    <scope>MUTAGENESIS OF LYS-16; LYS-17; MET-20; LEU-24; LEU-27; ARG-44; PHE-60 AND ARG-83</scope>
</reference>